<protein>
    <recommendedName>
        <fullName>Probable anion transporter 6, chloroplastic</fullName>
    </recommendedName>
    <alternativeName>
        <fullName>Phosphate transporter PHT4;5</fullName>
    </alternativeName>
</protein>
<organism>
    <name type="scientific">Arabidopsis thaliana</name>
    <name type="common">Mouse-ear cress</name>
    <dbReference type="NCBI Taxonomy" id="3702"/>
    <lineage>
        <taxon>Eukaryota</taxon>
        <taxon>Viridiplantae</taxon>
        <taxon>Streptophyta</taxon>
        <taxon>Embryophyta</taxon>
        <taxon>Tracheophyta</taxon>
        <taxon>Spermatophyta</taxon>
        <taxon>Magnoliopsida</taxon>
        <taxon>eudicotyledons</taxon>
        <taxon>Gunneridae</taxon>
        <taxon>Pentapetalae</taxon>
        <taxon>rosids</taxon>
        <taxon>malvids</taxon>
        <taxon>Brassicales</taxon>
        <taxon>Brassicaceae</taxon>
        <taxon>Camelineae</taxon>
        <taxon>Arabidopsis</taxon>
    </lineage>
</organism>
<name>ANTR6_ARATH</name>
<feature type="transit peptide" description="Chloroplast" evidence="1">
    <location>
        <begin position="1"/>
        <end status="unknown"/>
    </location>
</feature>
<feature type="chain" id="PRO_0000331539" description="Probable anion transporter 6, chloroplastic">
    <location>
        <begin status="unknown"/>
        <end position="517"/>
    </location>
</feature>
<feature type="transmembrane region" description="Helical" evidence="1">
    <location>
        <begin position="130"/>
        <end position="150"/>
    </location>
</feature>
<feature type="transmembrane region" description="Helical" evidence="1">
    <location>
        <begin position="170"/>
        <end position="190"/>
    </location>
</feature>
<feature type="transmembrane region" description="Helical" evidence="1">
    <location>
        <begin position="229"/>
        <end position="249"/>
    </location>
</feature>
<feature type="transmembrane region" description="Helical" evidence="1">
    <location>
        <begin position="255"/>
        <end position="275"/>
    </location>
</feature>
<feature type="transmembrane region" description="Helical" evidence="1">
    <location>
        <begin position="312"/>
        <end position="332"/>
    </location>
</feature>
<feature type="transmembrane region" description="Helical" evidence="1">
    <location>
        <begin position="352"/>
        <end position="372"/>
    </location>
</feature>
<feature type="transmembrane region" description="Helical" evidence="1">
    <location>
        <begin position="397"/>
        <end position="417"/>
    </location>
</feature>
<feature type="transmembrane region" description="Helical" evidence="1">
    <location>
        <begin position="420"/>
        <end position="440"/>
    </location>
</feature>
<feature type="transmembrane region" description="Helical" evidence="1">
    <location>
        <begin position="452"/>
        <end position="472"/>
    </location>
</feature>
<feature type="transmembrane region" description="Helical" evidence="1">
    <location>
        <begin position="484"/>
        <end position="504"/>
    </location>
</feature>
<feature type="region of interest" description="Disordered" evidence="2">
    <location>
        <begin position="51"/>
        <end position="73"/>
    </location>
</feature>
<feature type="compositionally biased region" description="Basic and acidic residues" evidence="2">
    <location>
        <begin position="52"/>
        <end position="70"/>
    </location>
</feature>
<keyword id="KW-0150">Chloroplast</keyword>
<keyword id="KW-0472">Membrane</keyword>
<keyword id="KW-0934">Plastid</keyword>
<keyword id="KW-1185">Reference proteome</keyword>
<keyword id="KW-0809">Transit peptide</keyword>
<keyword id="KW-0812">Transmembrane</keyword>
<keyword id="KW-1133">Transmembrane helix</keyword>
<evidence type="ECO:0000255" key="1"/>
<evidence type="ECO:0000256" key="2">
    <source>
        <dbReference type="SAM" id="MobiDB-lite"/>
    </source>
</evidence>
<evidence type="ECO:0000269" key="3">
    <source>
    </source>
</evidence>
<evidence type="ECO:0000269" key="4">
    <source>
    </source>
</evidence>
<evidence type="ECO:0000305" key="5"/>
<accession>Q3E9A0</accession>
<dbReference type="EMBL" id="AF296825">
    <property type="status" value="NOT_ANNOTATED_CDS"/>
    <property type="molecule type" value="Genomic_DNA"/>
</dbReference>
<dbReference type="EMBL" id="CP002688">
    <property type="protein sequence ID" value="AED92837.1"/>
    <property type="molecule type" value="Genomic_DNA"/>
</dbReference>
<dbReference type="EMBL" id="AY095993">
    <property type="status" value="NOT_ANNOTATED_CDS"/>
    <property type="molecule type" value="mRNA"/>
</dbReference>
<dbReference type="RefSeq" id="NP_197538.2">
    <property type="nucleotide sequence ID" value="NM_122045.4"/>
</dbReference>
<dbReference type="SMR" id="Q3E9A0"/>
<dbReference type="FunCoup" id="Q3E9A0">
    <property type="interactions" value="420"/>
</dbReference>
<dbReference type="STRING" id="3702.Q3E9A0"/>
<dbReference type="PaxDb" id="3702-AT5G20380.1"/>
<dbReference type="ProteomicsDB" id="245057"/>
<dbReference type="EnsemblPlants" id="AT5G20380.1">
    <property type="protein sequence ID" value="AT5G20380.1"/>
    <property type="gene ID" value="AT5G20380"/>
</dbReference>
<dbReference type="GeneID" id="832160"/>
<dbReference type="Gramene" id="AT5G20380.1">
    <property type="protein sequence ID" value="AT5G20380.1"/>
    <property type="gene ID" value="AT5G20380"/>
</dbReference>
<dbReference type="KEGG" id="ath:AT5G20380"/>
<dbReference type="Araport" id="AT5G20380"/>
<dbReference type="TAIR" id="AT5G20380">
    <property type="gene designation" value="PHT4"/>
</dbReference>
<dbReference type="eggNOG" id="KOG2532">
    <property type="taxonomic scope" value="Eukaryota"/>
</dbReference>
<dbReference type="HOGENOM" id="CLU_001265_5_11_1"/>
<dbReference type="InParanoid" id="Q3E9A0"/>
<dbReference type="PhylomeDB" id="Q3E9A0"/>
<dbReference type="PRO" id="PR:Q3E9A0"/>
<dbReference type="Proteomes" id="UP000006548">
    <property type="component" value="Chromosome 5"/>
</dbReference>
<dbReference type="ExpressionAtlas" id="Q3E9A0">
    <property type="expression patterns" value="baseline and differential"/>
</dbReference>
<dbReference type="GO" id="GO:0031969">
    <property type="term" value="C:chloroplast membrane"/>
    <property type="evidence" value="ECO:0007669"/>
    <property type="project" value="UniProtKB-SubCell"/>
</dbReference>
<dbReference type="GO" id="GO:0009536">
    <property type="term" value="C:plastid"/>
    <property type="evidence" value="ECO:0000314"/>
    <property type="project" value="TAIR"/>
</dbReference>
<dbReference type="GO" id="GO:0005315">
    <property type="term" value="F:phosphate transmembrane transporter activity"/>
    <property type="evidence" value="ECO:0000314"/>
    <property type="project" value="TAIR"/>
</dbReference>
<dbReference type="GO" id="GO:0006952">
    <property type="term" value="P:defense response"/>
    <property type="evidence" value="ECO:0000270"/>
    <property type="project" value="TAIR"/>
</dbReference>
<dbReference type="CDD" id="cd17380">
    <property type="entry name" value="MFS_SLC17A9_like"/>
    <property type="match status" value="1"/>
</dbReference>
<dbReference type="FunFam" id="1.20.1250.20:FF:000213">
    <property type="entry name" value="Probable anion transporter 6, chloroplastic"/>
    <property type="match status" value="1"/>
</dbReference>
<dbReference type="FunFam" id="1.20.1250.20:FF:000272">
    <property type="entry name" value="Probable anion transporter 6, chloroplastic"/>
    <property type="match status" value="1"/>
</dbReference>
<dbReference type="Gene3D" id="1.20.1250.20">
    <property type="entry name" value="MFS general substrate transporter like domains"/>
    <property type="match status" value="2"/>
</dbReference>
<dbReference type="InterPro" id="IPR011701">
    <property type="entry name" value="MFS"/>
</dbReference>
<dbReference type="InterPro" id="IPR020846">
    <property type="entry name" value="MFS_dom"/>
</dbReference>
<dbReference type="InterPro" id="IPR050382">
    <property type="entry name" value="MFS_Na/Anion_cotransporter"/>
</dbReference>
<dbReference type="InterPro" id="IPR036259">
    <property type="entry name" value="MFS_trans_sf"/>
</dbReference>
<dbReference type="InterPro" id="IPR044777">
    <property type="entry name" value="SLC17A9-like"/>
</dbReference>
<dbReference type="PANTHER" id="PTHR11662:SF243">
    <property type="entry name" value="ANION TRANSPORTER 6, CHLOROPLASTIC-RELATED"/>
    <property type="match status" value="1"/>
</dbReference>
<dbReference type="PANTHER" id="PTHR11662">
    <property type="entry name" value="SOLUTE CARRIER FAMILY 17"/>
    <property type="match status" value="1"/>
</dbReference>
<dbReference type="Pfam" id="PF07690">
    <property type="entry name" value="MFS_1"/>
    <property type="match status" value="1"/>
</dbReference>
<dbReference type="SUPFAM" id="SSF103473">
    <property type="entry name" value="MFS general substrate transporter"/>
    <property type="match status" value="1"/>
</dbReference>
<dbReference type="PROSITE" id="PS50850">
    <property type="entry name" value="MFS"/>
    <property type="match status" value="1"/>
</dbReference>
<comment type="function">
    <text evidence="3">Inorganic phosphate and probable anion transporter.</text>
</comment>
<comment type="subcellular location">
    <subcellularLocation>
        <location evidence="3">Plastid</location>
        <location evidence="3">Chloroplast membrane</location>
        <topology evidence="3">Multi-pass membrane protein</topology>
    </subcellularLocation>
</comment>
<comment type="tissue specificity">
    <text evidence="3 4">Expressed in leaf veins and sepals.</text>
</comment>
<comment type="induction">
    <text evidence="4">Expressed with a circadian rhythm showing a peak during the middle of the day (under long day conditions).</text>
</comment>
<comment type="similarity">
    <text evidence="5">Belongs to the major facilitator superfamily. Sodium/anion cotransporter (TC 2.A.1.14) family.</text>
</comment>
<sequence>MARLTLRPHNHFFSSPIYAHKQPFLSVYTIFPHHHQNPLIKSRVKCSASGTERVRESKKLPPKDPIEDPKPQLPIPEVLSTETGFEQNWPPWKNIPQRYKLIGATSLAFVICNMDKVNLSIAIIPMSHQFGWSSSVAGLVQSSFFWGYALSQLPGGWLSKIFGGRKVLEIGVFTWSFATALVPLLAGFMPGLIFSRILVGIGEGVSPSAATDLIARTIPVKERSRAVGFVFGGLSLGSVMGLLLAPPIIETFNWESVFYLFGLLGVGWFVGFQFLNEEEVSYKGNEISTSHKSENATKEELGSSLKEIPWKSFFQSPAVWAMIYTHFCGSWGHYTCLSWLPTYFSEALSLNLTEAAWVSILPPLASIVVTSLASQFADYLITNGVDTTTVRKICQTIAFVAPAICMTLSSVDIGLPPWEIVGILTAGLALSSFALSGLYCTHQDISPEYASILLGITNTVGAVPGIVGVALTGFLLDSTHSWTMSLFVPSIFFYLTGTVVWLAFASSEPQTFRKEDS</sequence>
<gene>
    <name type="primary">ANTR6</name>
    <name type="synonym">PHT4;5</name>
    <name type="ordered locus">At5g20380</name>
    <name type="ORF">F5O24.270</name>
</gene>
<reference key="1">
    <citation type="journal article" date="2000" name="Nature">
        <title>Sequence and analysis of chromosome 5 of the plant Arabidopsis thaliana.</title>
        <authorList>
            <person name="Tabata S."/>
            <person name="Kaneko T."/>
            <person name="Nakamura Y."/>
            <person name="Kotani H."/>
            <person name="Kato T."/>
            <person name="Asamizu E."/>
            <person name="Miyajima N."/>
            <person name="Sasamoto S."/>
            <person name="Kimura T."/>
            <person name="Hosouchi T."/>
            <person name="Kawashima K."/>
            <person name="Kohara M."/>
            <person name="Matsumoto M."/>
            <person name="Matsuno A."/>
            <person name="Muraki A."/>
            <person name="Nakayama S."/>
            <person name="Nakazaki N."/>
            <person name="Naruo K."/>
            <person name="Okumura S."/>
            <person name="Shinpo S."/>
            <person name="Takeuchi C."/>
            <person name="Wada T."/>
            <person name="Watanabe A."/>
            <person name="Yamada M."/>
            <person name="Yasuda M."/>
            <person name="Sato S."/>
            <person name="de la Bastide M."/>
            <person name="Huang E."/>
            <person name="Spiegel L."/>
            <person name="Gnoj L."/>
            <person name="O'Shaughnessy A."/>
            <person name="Preston R."/>
            <person name="Habermann K."/>
            <person name="Murray J."/>
            <person name="Johnson D."/>
            <person name="Rohlfing T."/>
            <person name="Nelson J."/>
            <person name="Stoneking T."/>
            <person name="Pepin K."/>
            <person name="Spieth J."/>
            <person name="Sekhon M."/>
            <person name="Armstrong J."/>
            <person name="Becker M."/>
            <person name="Belter E."/>
            <person name="Cordum H."/>
            <person name="Cordes M."/>
            <person name="Courtney L."/>
            <person name="Courtney W."/>
            <person name="Dante M."/>
            <person name="Du H."/>
            <person name="Edwards J."/>
            <person name="Fryman J."/>
            <person name="Haakensen B."/>
            <person name="Lamar E."/>
            <person name="Latreille P."/>
            <person name="Leonard S."/>
            <person name="Meyer R."/>
            <person name="Mulvaney E."/>
            <person name="Ozersky P."/>
            <person name="Riley A."/>
            <person name="Strowmatt C."/>
            <person name="Wagner-McPherson C."/>
            <person name="Wollam A."/>
            <person name="Yoakum M."/>
            <person name="Bell M."/>
            <person name="Dedhia N."/>
            <person name="Parnell L."/>
            <person name="Shah R."/>
            <person name="Rodriguez M."/>
            <person name="Hoon See L."/>
            <person name="Vil D."/>
            <person name="Baker J."/>
            <person name="Kirchoff K."/>
            <person name="Toth K."/>
            <person name="King L."/>
            <person name="Bahret A."/>
            <person name="Miller B."/>
            <person name="Marra M.A."/>
            <person name="Martienssen R."/>
            <person name="McCombie W.R."/>
            <person name="Wilson R.K."/>
            <person name="Murphy G."/>
            <person name="Bancroft I."/>
            <person name="Volckaert G."/>
            <person name="Wambutt R."/>
            <person name="Duesterhoeft A."/>
            <person name="Stiekema W."/>
            <person name="Pohl T."/>
            <person name="Entian K.-D."/>
            <person name="Terryn N."/>
            <person name="Hartley N."/>
            <person name="Bent E."/>
            <person name="Johnson S."/>
            <person name="Langham S.-A."/>
            <person name="McCullagh B."/>
            <person name="Robben J."/>
            <person name="Grymonprez B."/>
            <person name="Zimmermann W."/>
            <person name="Ramsperger U."/>
            <person name="Wedler H."/>
            <person name="Balke K."/>
            <person name="Wedler E."/>
            <person name="Peters S."/>
            <person name="van Staveren M."/>
            <person name="Dirkse W."/>
            <person name="Mooijman P."/>
            <person name="Klein Lankhorst R."/>
            <person name="Weitzenegger T."/>
            <person name="Bothe G."/>
            <person name="Rose M."/>
            <person name="Hauf J."/>
            <person name="Berneiser S."/>
            <person name="Hempel S."/>
            <person name="Feldpausch M."/>
            <person name="Lamberth S."/>
            <person name="Villarroel R."/>
            <person name="Gielen J."/>
            <person name="Ardiles W."/>
            <person name="Bents O."/>
            <person name="Lemcke K."/>
            <person name="Kolesov G."/>
            <person name="Mayer K.F.X."/>
            <person name="Rudd S."/>
            <person name="Schoof H."/>
            <person name="Schueller C."/>
            <person name="Zaccaria P."/>
            <person name="Mewes H.-W."/>
            <person name="Bevan M."/>
            <person name="Fransz P.F."/>
        </authorList>
    </citation>
    <scope>NUCLEOTIDE SEQUENCE [LARGE SCALE GENOMIC DNA]</scope>
    <source>
        <strain>cv. Columbia</strain>
    </source>
</reference>
<reference key="2">
    <citation type="journal article" date="2017" name="Plant J.">
        <title>Araport11: a complete reannotation of the Arabidopsis thaliana reference genome.</title>
        <authorList>
            <person name="Cheng C.Y."/>
            <person name="Krishnakumar V."/>
            <person name="Chan A.P."/>
            <person name="Thibaud-Nissen F."/>
            <person name="Schobel S."/>
            <person name="Town C.D."/>
        </authorList>
    </citation>
    <scope>GENOME REANNOTATION</scope>
    <source>
        <strain>cv. Columbia</strain>
    </source>
</reference>
<reference key="3">
    <citation type="journal article" date="2003" name="Science">
        <title>Empirical analysis of transcriptional activity in the Arabidopsis genome.</title>
        <authorList>
            <person name="Yamada K."/>
            <person name="Lim J."/>
            <person name="Dale J.M."/>
            <person name="Chen H."/>
            <person name="Shinn P."/>
            <person name="Palm C.J."/>
            <person name="Southwick A.M."/>
            <person name="Wu H.C."/>
            <person name="Kim C.J."/>
            <person name="Nguyen M."/>
            <person name="Pham P.K."/>
            <person name="Cheuk R.F."/>
            <person name="Karlin-Newmann G."/>
            <person name="Liu S.X."/>
            <person name="Lam B."/>
            <person name="Sakano H."/>
            <person name="Wu T."/>
            <person name="Yu G."/>
            <person name="Miranda M."/>
            <person name="Quach H.L."/>
            <person name="Tripp M."/>
            <person name="Chang C.H."/>
            <person name="Lee J.M."/>
            <person name="Toriumi M.J."/>
            <person name="Chan M.M."/>
            <person name="Tang C.C."/>
            <person name="Onodera C.S."/>
            <person name="Deng J.M."/>
            <person name="Akiyama K."/>
            <person name="Ansari Y."/>
            <person name="Arakawa T."/>
            <person name="Banh J."/>
            <person name="Banno F."/>
            <person name="Bowser L."/>
            <person name="Brooks S.Y."/>
            <person name="Carninci P."/>
            <person name="Chao Q."/>
            <person name="Choy N."/>
            <person name="Enju A."/>
            <person name="Goldsmith A.D."/>
            <person name="Gurjal M."/>
            <person name="Hansen N.F."/>
            <person name="Hayashizaki Y."/>
            <person name="Johnson-Hopson C."/>
            <person name="Hsuan V.W."/>
            <person name="Iida K."/>
            <person name="Karnes M."/>
            <person name="Khan S."/>
            <person name="Koesema E."/>
            <person name="Ishida J."/>
            <person name="Jiang P.X."/>
            <person name="Jones T."/>
            <person name="Kawai J."/>
            <person name="Kamiya A."/>
            <person name="Meyers C."/>
            <person name="Nakajima M."/>
            <person name="Narusaka M."/>
            <person name="Seki M."/>
            <person name="Sakurai T."/>
            <person name="Satou M."/>
            <person name="Tamse R."/>
            <person name="Vaysberg M."/>
            <person name="Wallender E.K."/>
            <person name="Wong C."/>
            <person name="Yamamura Y."/>
            <person name="Yuan S."/>
            <person name="Shinozaki K."/>
            <person name="Davis R.W."/>
            <person name="Theologis A."/>
            <person name="Ecker J.R."/>
        </authorList>
    </citation>
    <scope>NUCLEOTIDE SEQUENCE [LARGE SCALE MRNA]</scope>
    <source>
        <strain>cv. Columbia</strain>
    </source>
</reference>
<reference key="4">
    <citation type="journal article" date="2004" name="Planta">
        <title>Characterization of a protein of the plastid inner envelope having homology to animal inorganic phosphate, chloride and organic-anion transporters.</title>
        <authorList>
            <person name="Roth C."/>
            <person name="Menzel G."/>
            <person name="Petetot J.M."/>
            <person name="Rochat-Hacker S."/>
            <person name="Poirier Y."/>
        </authorList>
    </citation>
    <scope>GENE FAMILY</scope>
    <scope>NOMENCLATURE</scope>
</reference>
<reference key="5">
    <citation type="journal article" date="2008" name="New Phytol.">
        <title>Functional analysis of the Arabidopsis PHT4 family of intracellular phosphate transporters.</title>
        <authorList>
            <person name="Guo B."/>
            <person name="Jin Y."/>
            <person name="Wussler C."/>
            <person name="Blancaflor E.B."/>
            <person name="Motes C.M."/>
            <person name="Versaw W.K."/>
        </authorList>
    </citation>
    <scope>FUNCTION</scope>
    <scope>TISSUE SPECIFICITY</scope>
    <scope>SUBCELLULAR LOCATION</scope>
</reference>
<reference key="6">
    <citation type="journal article" date="2008" name="Plant Signal. Behav.">
        <title>Differential expression and phylogenetic analysis suggest specialization of plastid-localized members of the PHT4 phosphate transporter family for photosynthetic and heterotrophic tissues.</title>
        <authorList>
            <person name="Guo B."/>
            <person name="Irigoyen S."/>
            <person name="Fowler T.B."/>
            <person name="Versaw W.K."/>
        </authorList>
    </citation>
    <scope>TISSUE SPECIFICITY</scope>
    <scope>INDUCTION</scope>
</reference>
<proteinExistence type="evidence at transcript level"/>